<feature type="chain" id="PRO_0000235720" description="Ribonuclease HII">
    <location>
        <begin position="1"/>
        <end position="220"/>
    </location>
</feature>
<feature type="domain" description="RNase H type-2" evidence="2">
    <location>
        <begin position="16"/>
        <end position="216"/>
    </location>
</feature>
<feature type="binding site" evidence="1">
    <location>
        <position position="22"/>
    </location>
    <ligand>
        <name>a divalent metal cation</name>
        <dbReference type="ChEBI" id="CHEBI:60240"/>
    </ligand>
</feature>
<feature type="binding site" evidence="1">
    <location>
        <position position="23"/>
    </location>
    <ligand>
        <name>a divalent metal cation</name>
        <dbReference type="ChEBI" id="CHEBI:60240"/>
    </ligand>
</feature>
<feature type="binding site" evidence="1">
    <location>
        <position position="114"/>
    </location>
    <ligand>
        <name>a divalent metal cation</name>
        <dbReference type="ChEBI" id="CHEBI:60240"/>
    </ligand>
</feature>
<evidence type="ECO:0000255" key="1">
    <source>
        <dbReference type="HAMAP-Rule" id="MF_00052"/>
    </source>
</evidence>
<evidence type="ECO:0000255" key="2">
    <source>
        <dbReference type="PROSITE-ProRule" id="PRU01319"/>
    </source>
</evidence>
<gene>
    <name evidence="1" type="primary">rnhB</name>
    <name type="ordered locus">DVU_0834</name>
</gene>
<comment type="function">
    <text evidence="1">Endonuclease that specifically degrades the RNA of RNA-DNA hybrids.</text>
</comment>
<comment type="catalytic activity">
    <reaction evidence="1">
        <text>Endonucleolytic cleavage to 5'-phosphomonoester.</text>
        <dbReference type="EC" id="3.1.26.4"/>
    </reaction>
</comment>
<comment type="cofactor">
    <cofactor evidence="1">
        <name>Mn(2+)</name>
        <dbReference type="ChEBI" id="CHEBI:29035"/>
    </cofactor>
    <cofactor evidence="1">
        <name>Mg(2+)</name>
        <dbReference type="ChEBI" id="CHEBI:18420"/>
    </cofactor>
    <text evidence="1">Manganese or magnesium. Binds 1 divalent metal ion per monomer in the absence of substrate. May bind a second metal ion after substrate binding.</text>
</comment>
<comment type="subcellular location">
    <subcellularLocation>
        <location evidence="1">Cytoplasm</location>
    </subcellularLocation>
</comment>
<comment type="similarity">
    <text evidence="1">Belongs to the RNase HII family.</text>
</comment>
<name>RNH2_NITV2</name>
<keyword id="KW-0963">Cytoplasm</keyword>
<keyword id="KW-0255">Endonuclease</keyword>
<keyword id="KW-0378">Hydrolase</keyword>
<keyword id="KW-0464">Manganese</keyword>
<keyword id="KW-0479">Metal-binding</keyword>
<keyword id="KW-0540">Nuclease</keyword>
<keyword id="KW-1185">Reference proteome</keyword>
<reference key="1">
    <citation type="journal article" date="2004" name="Nat. Biotechnol.">
        <title>The genome sequence of the anaerobic, sulfate-reducing bacterium Desulfovibrio vulgaris Hildenborough.</title>
        <authorList>
            <person name="Heidelberg J.F."/>
            <person name="Seshadri R."/>
            <person name="Haveman S.A."/>
            <person name="Hemme C.L."/>
            <person name="Paulsen I.T."/>
            <person name="Kolonay J.F."/>
            <person name="Eisen J.A."/>
            <person name="Ward N.L."/>
            <person name="Methe B.A."/>
            <person name="Brinkac L.M."/>
            <person name="Daugherty S.C."/>
            <person name="DeBoy R.T."/>
            <person name="Dodson R.J."/>
            <person name="Durkin A.S."/>
            <person name="Madupu R."/>
            <person name="Nelson W.C."/>
            <person name="Sullivan S.A."/>
            <person name="Fouts D.E."/>
            <person name="Haft D.H."/>
            <person name="Selengut J."/>
            <person name="Peterson J.D."/>
            <person name="Davidsen T.M."/>
            <person name="Zafar N."/>
            <person name="Zhou L."/>
            <person name="Radune D."/>
            <person name="Dimitrov G."/>
            <person name="Hance M."/>
            <person name="Tran K."/>
            <person name="Khouri H.M."/>
            <person name="Gill J."/>
            <person name="Utterback T.R."/>
            <person name="Feldblyum T.V."/>
            <person name="Wall J.D."/>
            <person name="Voordouw G."/>
            <person name="Fraser C.M."/>
        </authorList>
    </citation>
    <scope>NUCLEOTIDE SEQUENCE [LARGE SCALE GENOMIC DNA]</scope>
    <source>
        <strain>ATCC 29579 / DSM 644 / CCUG 34227 / NCIMB 8303 / VKM B-1760 / Hildenborough</strain>
    </source>
</reference>
<protein>
    <recommendedName>
        <fullName evidence="1">Ribonuclease HII</fullName>
        <shortName evidence="1">RNase HII</shortName>
        <ecNumber evidence="1">3.1.26.4</ecNumber>
    </recommendedName>
</protein>
<organism>
    <name type="scientific">Nitratidesulfovibrio vulgaris (strain ATCC 29579 / DSM 644 / CCUG 34227 / NCIMB 8303 / VKM B-1760 / Hildenborough)</name>
    <name type="common">Desulfovibrio vulgaris</name>
    <dbReference type="NCBI Taxonomy" id="882"/>
    <lineage>
        <taxon>Bacteria</taxon>
        <taxon>Pseudomonadati</taxon>
        <taxon>Thermodesulfobacteriota</taxon>
        <taxon>Desulfovibrionia</taxon>
        <taxon>Desulfovibrionales</taxon>
        <taxon>Desulfovibrionaceae</taxon>
        <taxon>Nitratidesulfovibrio</taxon>
    </lineage>
</organism>
<proteinExistence type="inferred from homology"/>
<accession>Q72DU5</accession>
<dbReference type="EC" id="3.1.26.4" evidence="1"/>
<dbReference type="EMBL" id="AE017285">
    <property type="protein sequence ID" value="AAS95314.1"/>
    <property type="molecule type" value="Genomic_DNA"/>
</dbReference>
<dbReference type="RefSeq" id="WP_010938135.1">
    <property type="nucleotide sequence ID" value="NC_002937.3"/>
</dbReference>
<dbReference type="RefSeq" id="YP_010055.1">
    <property type="nucleotide sequence ID" value="NC_002937.3"/>
</dbReference>
<dbReference type="SMR" id="Q72DU5"/>
<dbReference type="STRING" id="882.DVU_0834"/>
<dbReference type="PaxDb" id="882-DVU_0834"/>
<dbReference type="EnsemblBacteria" id="AAS95314">
    <property type="protein sequence ID" value="AAS95314"/>
    <property type="gene ID" value="DVU_0834"/>
</dbReference>
<dbReference type="KEGG" id="dvu:DVU_0834"/>
<dbReference type="PATRIC" id="fig|882.5.peg.780"/>
<dbReference type="eggNOG" id="COG0164">
    <property type="taxonomic scope" value="Bacteria"/>
</dbReference>
<dbReference type="HOGENOM" id="CLU_036532_3_1_7"/>
<dbReference type="OrthoDB" id="9803420at2"/>
<dbReference type="PhylomeDB" id="Q72DU5"/>
<dbReference type="Proteomes" id="UP000002194">
    <property type="component" value="Chromosome"/>
</dbReference>
<dbReference type="GO" id="GO:0005737">
    <property type="term" value="C:cytoplasm"/>
    <property type="evidence" value="ECO:0007669"/>
    <property type="project" value="UniProtKB-SubCell"/>
</dbReference>
<dbReference type="GO" id="GO:0032299">
    <property type="term" value="C:ribonuclease H2 complex"/>
    <property type="evidence" value="ECO:0007669"/>
    <property type="project" value="TreeGrafter"/>
</dbReference>
<dbReference type="GO" id="GO:0030145">
    <property type="term" value="F:manganese ion binding"/>
    <property type="evidence" value="ECO:0007669"/>
    <property type="project" value="UniProtKB-UniRule"/>
</dbReference>
<dbReference type="GO" id="GO:0003723">
    <property type="term" value="F:RNA binding"/>
    <property type="evidence" value="ECO:0007669"/>
    <property type="project" value="InterPro"/>
</dbReference>
<dbReference type="GO" id="GO:0004523">
    <property type="term" value="F:RNA-DNA hybrid ribonuclease activity"/>
    <property type="evidence" value="ECO:0007669"/>
    <property type="project" value="UniProtKB-UniRule"/>
</dbReference>
<dbReference type="GO" id="GO:0043137">
    <property type="term" value="P:DNA replication, removal of RNA primer"/>
    <property type="evidence" value="ECO:0007669"/>
    <property type="project" value="TreeGrafter"/>
</dbReference>
<dbReference type="GO" id="GO:0006298">
    <property type="term" value="P:mismatch repair"/>
    <property type="evidence" value="ECO:0007669"/>
    <property type="project" value="TreeGrafter"/>
</dbReference>
<dbReference type="CDD" id="cd07182">
    <property type="entry name" value="RNase_HII_bacteria_HII_like"/>
    <property type="match status" value="1"/>
</dbReference>
<dbReference type="Gene3D" id="3.30.420.10">
    <property type="entry name" value="Ribonuclease H-like superfamily/Ribonuclease H"/>
    <property type="match status" value="1"/>
</dbReference>
<dbReference type="HAMAP" id="MF_00052_B">
    <property type="entry name" value="RNase_HII_B"/>
    <property type="match status" value="1"/>
</dbReference>
<dbReference type="InterPro" id="IPR022898">
    <property type="entry name" value="RNase_HII"/>
</dbReference>
<dbReference type="InterPro" id="IPR001352">
    <property type="entry name" value="RNase_HII/HIII"/>
</dbReference>
<dbReference type="InterPro" id="IPR024567">
    <property type="entry name" value="RNase_HII/HIII_dom"/>
</dbReference>
<dbReference type="InterPro" id="IPR012337">
    <property type="entry name" value="RNaseH-like_sf"/>
</dbReference>
<dbReference type="InterPro" id="IPR036397">
    <property type="entry name" value="RNaseH_sf"/>
</dbReference>
<dbReference type="NCBIfam" id="NF000595">
    <property type="entry name" value="PRK00015.1-3"/>
    <property type="match status" value="1"/>
</dbReference>
<dbReference type="PANTHER" id="PTHR10954">
    <property type="entry name" value="RIBONUCLEASE H2 SUBUNIT A"/>
    <property type="match status" value="1"/>
</dbReference>
<dbReference type="PANTHER" id="PTHR10954:SF18">
    <property type="entry name" value="RIBONUCLEASE HII"/>
    <property type="match status" value="1"/>
</dbReference>
<dbReference type="Pfam" id="PF01351">
    <property type="entry name" value="RNase_HII"/>
    <property type="match status" value="1"/>
</dbReference>
<dbReference type="SUPFAM" id="SSF53098">
    <property type="entry name" value="Ribonuclease H-like"/>
    <property type="match status" value="1"/>
</dbReference>
<dbReference type="PROSITE" id="PS51975">
    <property type="entry name" value="RNASE_H_2"/>
    <property type="match status" value="1"/>
</dbReference>
<sequence length="220" mass="23637">MPPRPQRLAPVADLPPVFAGIDEAGRGCLAGPVVAAAVILPQEYALPGLTDSKKLTAARRESLAEGIRSCAVTWGIGVVWPRDIDRINILQATFRAMARAVRVLRQPPPAILIDGDKTLPPHVLTSLSCDGHLPTQRAIIGGDGCIPAISAASILAKTFRDRLMDTLDRRYHGYGFAKHKGYGTAEHLAAIAAHGPCAQHRLTFRGVRPNPAAEEQLTLW</sequence>